<name>SKA1_XENTR</name>
<protein>
    <recommendedName>
        <fullName evidence="5">SKA complex subunit 1</fullName>
    </recommendedName>
    <alternativeName>
        <fullName evidence="5">Spindle and kinetochore-associated protein 1</fullName>
    </alternativeName>
</protein>
<keyword id="KW-0131">Cell cycle</keyword>
<keyword id="KW-0132">Cell division</keyword>
<keyword id="KW-0137">Centromere</keyword>
<keyword id="KW-0158">Chromosome</keyword>
<keyword id="KW-0175">Coiled coil</keyword>
<keyword id="KW-0963">Cytoplasm</keyword>
<keyword id="KW-0206">Cytoskeleton</keyword>
<keyword id="KW-0995">Kinetochore</keyword>
<keyword id="KW-0493">Microtubule</keyword>
<keyword id="KW-0498">Mitosis</keyword>
<keyword id="KW-1185">Reference proteome</keyword>
<reference key="1">
    <citation type="submission" date="2008-01" db="EMBL/GenBank/DDBJ databases">
        <authorList>
            <consortium name="NIH - Xenopus Gene Collection (XGC) project"/>
        </authorList>
    </citation>
    <scope>NUCLEOTIDE SEQUENCE [LARGE SCALE MRNA]</scope>
    <source>
        <tissue>Testis</tissue>
    </source>
</reference>
<accession>B0BM28</accession>
<sequence length="252" mass="28952">MDPGDLDELCSHVNSKISLIKKTLQLRNIGQDPSLNSVLSKIAFEMHSLYNLLNNLETEVQRQETIANSLRELQATVERDFTEASHLKENIPPHLPKRTQSSSSAPDEAPEMVVKVAAPEPAKKPSKEKPIKEMELITVHEFGTVPAYMKNRLTYEQINNIIEELNKAVVGKYKILHQPLKSLSNQARKQLSRYKEEETKDTKGQFFIVDQDIKDFTQVKVDKRFHGMLSILRHCHRLREIRGKGLVRYIIC</sequence>
<comment type="function">
    <text evidence="1 2">Component of the SKA complex, a microtubule plus end-binding complex of the outer kinetochore that stabilizes spindle microtubule-kinetochore attachments, promotes alignment of chromosomes at the mitotic spindle equator (chromosome congression) and assists suppression of the spindle assembly checkpoint. Kinetochores, consisting of a centromere-associated inner segment and a microtubule-contacting outer segment, play a crucial role in chromosome segregation by mediating the physical connection between centromeric DNA and spindle microtubules. The outer kinetochore is made up of the ten-subunit KMN network complex, comprising the MIS12, NDC80 and KNL1 complexes, and auxiliary microtubule-associated components such as the SKA complex; together they connect the outer kinetochore with the inner kinetochore, bind microtubules, and mediate interactions with mitotic checkpoint proteins that delay anaphase until chromosomes are bioriented on the spindle. The SKA complex is loaded onto bioriented kinetochores and it facilitates chromosome congression by stabilizing microtubules together with MAPRE1, and end-on attachment of the NDC80 complex to depolymerizing spindle microtubules, thereby assisting the poleward-moving kinetochore in withstanding microtubule pulling forces. The complex associates with dynamic microtubule plus-ends and can track both depolymerizing and elongating microtubules. The complex recruits protein phosphatase 1 (PP1) to the kinetochore in prometaphase and metaphase, to oppose spindle assembly checkpoint signaling and promote the onset of anaphase. In the complex, it mediates interactions with microtubules. It also stimulates AURKB/Aurora B catalytic activity (By similarity). During meiosis the SKA complex stabilizes the meiotic spindle and is required for its migration to the cortex (By similarity).</text>
</comment>
<comment type="subunit">
    <text evidence="1">Component of the SKA complex, composed of ska1, ska2 and ska3.</text>
</comment>
<comment type="subcellular location">
    <subcellularLocation>
        <location evidence="1">Cytoplasm</location>
        <location evidence="1">Cytoskeleton</location>
        <location evidence="1">Spindle</location>
    </subcellularLocation>
    <subcellularLocation>
        <location evidence="1">Chromosome</location>
        <location evidence="1">Centromere</location>
        <location evidence="1">Kinetochore</location>
    </subcellularLocation>
</comment>
<comment type="similarity">
    <text evidence="5">Belongs to the SKA1 family.</text>
</comment>
<gene>
    <name type="primary">ska1</name>
</gene>
<proteinExistence type="evidence at transcript level"/>
<feature type="chain" id="PRO_0000373888" description="SKA complex subunit 1">
    <location>
        <begin position="1"/>
        <end position="252"/>
    </location>
</feature>
<feature type="region of interest" description="Disordered" evidence="4">
    <location>
        <begin position="84"/>
        <end position="111"/>
    </location>
</feature>
<feature type="region of interest" description="Microtubule binding" evidence="1">
    <location>
        <begin position="129"/>
        <end position="252"/>
    </location>
</feature>
<feature type="coiled-coil region" evidence="3">
    <location>
        <begin position="44"/>
        <end position="75"/>
    </location>
</feature>
<organism>
    <name type="scientific">Xenopus tropicalis</name>
    <name type="common">Western clawed frog</name>
    <name type="synonym">Silurana tropicalis</name>
    <dbReference type="NCBI Taxonomy" id="8364"/>
    <lineage>
        <taxon>Eukaryota</taxon>
        <taxon>Metazoa</taxon>
        <taxon>Chordata</taxon>
        <taxon>Craniata</taxon>
        <taxon>Vertebrata</taxon>
        <taxon>Euteleostomi</taxon>
        <taxon>Amphibia</taxon>
        <taxon>Batrachia</taxon>
        <taxon>Anura</taxon>
        <taxon>Pipoidea</taxon>
        <taxon>Pipidae</taxon>
        <taxon>Xenopodinae</taxon>
        <taxon>Xenopus</taxon>
        <taxon>Silurana</taxon>
    </lineage>
</organism>
<evidence type="ECO:0000250" key="1">
    <source>
        <dbReference type="UniProtKB" id="Q96BD8"/>
    </source>
</evidence>
<evidence type="ECO:0000250" key="2">
    <source>
        <dbReference type="UniProtKB" id="Q9CPV1"/>
    </source>
</evidence>
<evidence type="ECO:0000255" key="3"/>
<evidence type="ECO:0000256" key="4">
    <source>
        <dbReference type="SAM" id="MobiDB-lite"/>
    </source>
</evidence>
<evidence type="ECO:0000305" key="5"/>
<dbReference type="EMBL" id="BC158262">
    <property type="protein sequence ID" value="AAI58263.1"/>
    <property type="molecule type" value="mRNA"/>
</dbReference>
<dbReference type="RefSeq" id="NP_001119997.1">
    <property type="nucleotide sequence ID" value="NM_001126525.1"/>
</dbReference>
<dbReference type="SMR" id="B0BM28"/>
<dbReference type="FunCoup" id="B0BM28">
    <property type="interactions" value="402"/>
</dbReference>
<dbReference type="STRING" id="8364.ENSXETP00000011492"/>
<dbReference type="PaxDb" id="8364-ENSXETP00000019595"/>
<dbReference type="GeneID" id="100144953"/>
<dbReference type="KEGG" id="xtr:100144953"/>
<dbReference type="AGR" id="Xenbase:XB-GENE-5759531"/>
<dbReference type="CTD" id="220134"/>
<dbReference type="Xenbase" id="XB-GENE-5759531">
    <property type="gene designation" value="ska1"/>
</dbReference>
<dbReference type="eggNOG" id="KOG4832">
    <property type="taxonomic scope" value="Eukaryota"/>
</dbReference>
<dbReference type="InParanoid" id="B0BM28"/>
<dbReference type="OrthoDB" id="5962at2759"/>
<dbReference type="Reactome" id="R-XTR-141444">
    <property type="pathway name" value="Amplification of signal from unattached kinetochores via a MAD2 inhibitory signal"/>
</dbReference>
<dbReference type="Reactome" id="R-XTR-2467813">
    <property type="pathway name" value="Separation of Sister Chromatids"/>
</dbReference>
<dbReference type="Reactome" id="R-XTR-2500257">
    <property type="pathway name" value="Resolution of Sister Chromatid Cohesion"/>
</dbReference>
<dbReference type="Reactome" id="R-XTR-5663220">
    <property type="pathway name" value="RHO GTPases Activate Formins"/>
</dbReference>
<dbReference type="Reactome" id="R-XTR-68877">
    <property type="pathway name" value="Mitotic Prometaphase"/>
</dbReference>
<dbReference type="Reactome" id="R-XTR-9648025">
    <property type="pathway name" value="EML4 and NUDC in mitotic spindle formation"/>
</dbReference>
<dbReference type="Proteomes" id="UP000008143">
    <property type="component" value="Chromosome 1"/>
</dbReference>
<dbReference type="GO" id="GO:0005737">
    <property type="term" value="C:cytoplasm"/>
    <property type="evidence" value="ECO:0007669"/>
    <property type="project" value="UniProtKB-KW"/>
</dbReference>
<dbReference type="GO" id="GO:0072687">
    <property type="term" value="C:meiotic spindle"/>
    <property type="evidence" value="ECO:0000250"/>
    <property type="project" value="UniProtKB"/>
</dbReference>
<dbReference type="GO" id="GO:0005874">
    <property type="term" value="C:microtubule"/>
    <property type="evidence" value="ECO:0007669"/>
    <property type="project" value="UniProtKB-KW"/>
</dbReference>
<dbReference type="GO" id="GO:0000940">
    <property type="term" value="C:outer kinetochore"/>
    <property type="evidence" value="ECO:0000250"/>
    <property type="project" value="UniProtKB"/>
</dbReference>
<dbReference type="GO" id="GO:0008017">
    <property type="term" value="F:microtubule binding"/>
    <property type="evidence" value="ECO:0000250"/>
    <property type="project" value="UniProtKB"/>
</dbReference>
<dbReference type="GO" id="GO:0051315">
    <property type="term" value="P:attachment of mitotic spindle microtubules to kinetochore"/>
    <property type="evidence" value="ECO:0000250"/>
    <property type="project" value="UniProtKB"/>
</dbReference>
<dbReference type="GO" id="GO:0051301">
    <property type="term" value="P:cell division"/>
    <property type="evidence" value="ECO:0007669"/>
    <property type="project" value="UniProtKB-KW"/>
</dbReference>
<dbReference type="GO" id="GO:0000278">
    <property type="term" value="P:mitotic cell cycle"/>
    <property type="evidence" value="ECO:0000250"/>
    <property type="project" value="UniProtKB"/>
</dbReference>
<dbReference type="GO" id="GO:0007080">
    <property type="term" value="P:mitotic metaphase chromosome alignment"/>
    <property type="evidence" value="ECO:0000250"/>
    <property type="project" value="UniProtKB"/>
</dbReference>
<dbReference type="GO" id="GO:0000070">
    <property type="term" value="P:mitotic sister chromatid segregation"/>
    <property type="evidence" value="ECO:0000250"/>
    <property type="project" value="UniProtKB"/>
</dbReference>
<dbReference type="GO" id="GO:0031110">
    <property type="term" value="P:regulation of microtubule polymerization or depolymerization"/>
    <property type="evidence" value="ECO:0000250"/>
    <property type="project" value="UniProtKB"/>
</dbReference>
<dbReference type="CDD" id="cd12958">
    <property type="entry name" value="SKA1_N"/>
    <property type="match status" value="1"/>
</dbReference>
<dbReference type="FunFam" id="1.10.10.1890:FF:000004">
    <property type="entry name" value="Spindle and kinetochore-associated protein 1"/>
    <property type="match status" value="1"/>
</dbReference>
<dbReference type="Gene3D" id="6.10.250.1370">
    <property type="match status" value="1"/>
</dbReference>
<dbReference type="Gene3D" id="1.10.10.1890">
    <property type="entry name" value="Ska1 microtubule binding domain-like"/>
    <property type="match status" value="1"/>
</dbReference>
<dbReference type="InterPro" id="IPR009829">
    <property type="entry name" value="SKA1"/>
</dbReference>
<dbReference type="InterPro" id="IPR042031">
    <property type="entry name" value="SKA1_MBD_sf"/>
</dbReference>
<dbReference type="PANTHER" id="PTHR28573">
    <property type="entry name" value="SPINDLE AND KINETOCHORE-ASSOCIATED PROTEIN 1"/>
    <property type="match status" value="1"/>
</dbReference>
<dbReference type="PANTHER" id="PTHR28573:SF1">
    <property type="entry name" value="SPINDLE AND KINETOCHORE-ASSOCIATED PROTEIN 1"/>
    <property type="match status" value="1"/>
</dbReference>
<dbReference type="Pfam" id="PF07160">
    <property type="entry name" value="SKA1"/>
    <property type="match status" value="1"/>
</dbReference>